<gene>
    <name type="primary">FGA</name>
</gene>
<reference key="1">
    <citation type="journal article" date="1969" name="Biochim. Biophys. Acta">
        <title>Characterization of fibrinopeptides A and B from a drill (Mandrillus leucophaeus).</title>
        <authorList>
            <person name="Doolittle R.F."/>
            <person name="Glascow C."/>
            <person name="Mross G.A."/>
        </authorList>
    </citation>
    <scope>PROTEIN SEQUENCE</scope>
</reference>
<dbReference type="Proteomes" id="UP000233140">
    <property type="component" value="Unassembled WGS sequence"/>
</dbReference>
<dbReference type="GO" id="GO:0005576">
    <property type="term" value="C:extracellular region"/>
    <property type="evidence" value="ECO:0007669"/>
    <property type="project" value="UniProtKB-SubCell"/>
</dbReference>
<dbReference type="GO" id="GO:0002250">
    <property type="term" value="P:adaptive immune response"/>
    <property type="evidence" value="ECO:0007669"/>
    <property type="project" value="UniProtKB-KW"/>
</dbReference>
<dbReference type="GO" id="GO:0007596">
    <property type="term" value="P:blood coagulation"/>
    <property type="evidence" value="ECO:0007669"/>
    <property type="project" value="UniProtKB-KW"/>
</dbReference>
<dbReference type="GO" id="GO:0045087">
    <property type="term" value="P:innate immune response"/>
    <property type="evidence" value="ECO:0007669"/>
    <property type="project" value="UniProtKB-KW"/>
</dbReference>
<name>FIBA_MANLE</name>
<organism>
    <name type="scientific">Mandrillus leucophaeus</name>
    <name type="common">Drill</name>
    <name type="synonym">Papio leucophaeus</name>
    <dbReference type="NCBI Taxonomy" id="9568"/>
    <lineage>
        <taxon>Eukaryota</taxon>
        <taxon>Metazoa</taxon>
        <taxon>Chordata</taxon>
        <taxon>Craniata</taxon>
        <taxon>Vertebrata</taxon>
        <taxon>Euteleostomi</taxon>
        <taxon>Mammalia</taxon>
        <taxon>Eutheria</taxon>
        <taxon>Euarchontoglires</taxon>
        <taxon>Primates</taxon>
        <taxon>Haplorrhini</taxon>
        <taxon>Catarrhini</taxon>
        <taxon>Cercopithecidae</taxon>
        <taxon>Cercopithecinae</taxon>
        <taxon>Mandrillus</taxon>
    </lineage>
</organism>
<sequence>ADTGDGDFITEGGGVR</sequence>
<keyword id="KW-1064">Adaptive immunity</keyword>
<keyword id="KW-0094">Blood coagulation</keyword>
<keyword id="KW-0175">Coiled coil</keyword>
<keyword id="KW-0903">Direct protein sequencing</keyword>
<keyword id="KW-1015">Disulfide bond</keyword>
<keyword id="KW-0356">Hemostasis</keyword>
<keyword id="KW-0391">Immunity</keyword>
<keyword id="KW-0399">Innate immunity</keyword>
<keyword id="KW-1185">Reference proteome</keyword>
<keyword id="KW-0964">Secreted</keyword>
<proteinExistence type="evidence at protein level"/>
<protein>
    <recommendedName>
        <fullName>Fibrinogen alpha chain</fullName>
    </recommendedName>
    <component>
        <recommendedName>
            <fullName>Fibrinopeptide A</fullName>
        </recommendedName>
    </component>
</protein>
<accession>P14455</accession>
<comment type="function">
    <text evidence="1">Cleaved by the protease thrombin to yield monomers which, together with fibrinogen beta (FGB) and fibrinogen gamma (FGG), polymerize to form an insoluble fibrin matrix. Fibrin has a major function in hemostasis as one of the primary components of blood clots. In addition, functions during the early stages of wound repair to stabilize the lesion and guide cell migration during re-epithelialization. Was originally thought to be essential for platelet aggregation, based on in vitro studies using anticoagulated blood. However, subsequent studies have shown that it is not absolutely required for thrombus formation in vivo. Enhances expression of SELP in activated platelets via an ITGB3-dependent pathway. Maternal fibrinogen is essential for successful pregnancy. Fibrin deposition is also associated with infection, where it protects against IFNG-mediated hemorrhage. May also facilitate the immune response via both innate and T-cell mediated pathways.</text>
</comment>
<comment type="subunit">
    <text evidence="2">Heterohexamer; disulfide linked. Contains 2 sets of 3 non-identical chains (alpha, beta and gamma). The 2 heterotrimers are in head to head conformation with the N-termini in a small central domain (By similarity).</text>
</comment>
<comment type="subcellular location">
    <subcellularLocation>
        <location>Secreted</location>
    </subcellularLocation>
</comment>
<comment type="domain">
    <text evidence="2">A long coiled coil structure formed by 3 polypeptide chains connects the central nodule to the C-terminal domains (distal nodules). The long C-terminal ends of the alpha chains fold back, contributing a fourth strand to the coiled coil structure.</text>
</comment>
<comment type="PTM">
    <text>Conversion of fibrinogen to fibrin is triggered by thrombin, which cleaves fibrinopeptides A and B from alpha and beta chains, and thus exposes the N-terminal polymerization sites responsible for the formation of the soft clot. The soft clot is converted into the hard clot by factor XIIIA which catalyzes the epsilon-(gamma-glutamyl)lysine cross-linking between gamma chains (stronger) and between alpha chains (weaker) of different monomers.</text>
</comment>
<comment type="PTM">
    <text>Forms F13A-mediated cross-links between a glutamine and the epsilon-amino group of a lysine residue, forming fibronectin-fibrinogen heteropolymers.</text>
</comment>
<evidence type="ECO:0000250" key="1">
    <source>
        <dbReference type="UniProtKB" id="E9PV24"/>
    </source>
</evidence>
<evidence type="ECO:0000250" key="2">
    <source>
        <dbReference type="UniProtKB" id="P02671"/>
    </source>
</evidence>
<feature type="peptide" id="PRO_0000009029" description="Fibrinopeptide A">
    <location>
        <begin position="1"/>
        <end position="16"/>
    </location>
</feature>
<feature type="non-terminal residue">
    <location>
        <position position="16"/>
    </location>
</feature>